<evidence type="ECO:0000255" key="1">
    <source>
        <dbReference type="HAMAP-Rule" id="MF_00508"/>
    </source>
</evidence>
<evidence type="ECO:0000305" key="2"/>
<organism>
    <name type="scientific">Staphylococcus aureus (strain MSSA476)</name>
    <dbReference type="NCBI Taxonomy" id="282459"/>
    <lineage>
        <taxon>Bacteria</taxon>
        <taxon>Bacillati</taxon>
        <taxon>Bacillota</taxon>
        <taxon>Bacilli</taxon>
        <taxon>Bacillales</taxon>
        <taxon>Staphylococcaceae</taxon>
        <taxon>Staphylococcus</taxon>
    </lineage>
</organism>
<keyword id="KW-0687">Ribonucleoprotein</keyword>
<keyword id="KW-0689">Ribosomal protein</keyword>
<comment type="function">
    <text evidence="1">Involved in the binding of tRNA to the ribosomes.</text>
</comment>
<comment type="subunit">
    <text evidence="1">Part of the 30S ribosomal subunit.</text>
</comment>
<comment type="similarity">
    <text evidence="1">Belongs to the universal ribosomal protein uS10 family.</text>
</comment>
<reference key="1">
    <citation type="journal article" date="2004" name="Proc. Natl. Acad. Sci. U.S.A.">
        <title>Complete genomes of two clinical Staphylococcus aureus strains: evidence for the rapid evolution of virulence and drug resistance.</title>
        <authorList>
            <person name="Holden M.T.G."/>
            <person name="Feil E.J."/>
            <person name="Lindsay J.A."/>
            <person name="Peacock S.J."/>
            <person name="Day N.P.J."/>
            <person name="Enright M.C."/>
            <person name="Foster T.J."/>
            <person name="Moore C.E."/>
            <person name="Hurst L."/>
            <person name="Atkin R."/>
            <person name="Barron A."/>
            <person name="Bason N."/>
            <person name="Bentley S.D."/>
            <person name="Chillingworth C."/>
            <person name="Chillingworth T."/>
            <person name="Churcher C."/>
            <person name="Clark L."/>
            <person name="Corton C."/>
            <person name="Cronin A."/>
            <person name="Doggett J."/>
            <person name="Dowd L."/>
            <person name="Feltwell T."/>
            <person name="Hance Z."/>
            <person name="Harris B."/>
            <person name="Hauser H."/>
            <person name="Holroyd S."/>
            <person name="Jagels K."/>
            <person name="James K.D."/>
            <person name="Lennard N."/>
            <person name="Line A."/>
            <person name="Mayes R."/>
            <person name="Moule S."/>
            <person name="Mungall K."/>
            <person name="Ormond D."/>
            <person name="Quail M.A."/>
            <person name="Rabbinowitsch E."/>
            <person name="Rutherford K.M."/>
            <person name="Sanders M."/>
            <person name="Sharp S."/>
            <person name="Simmonds M."/>
            <person name="Stevens K."/>
            <person name="Whitehead S."/>
            <person name="Barrell B.G."/>
            <person name="Spratt B.G."/>
            <person name="Parkhill J."/>
        </authorList>
    </citation>
    <scope>NUCLEOTIDE SEQUENCE [LARGE SCALE GENOMIC DNA]</scope>
    <source>
        <strain>MSSA476</strain>
    </source>
</reference>
<feature type="chain" id="PRO_0000146598" description="Small ribosomal subunit protein uS10">
    <location>
        <begin position="1"/>
        <end position="102"/>
    </location>
</feature>
<gene>
    <name evidence="1" type="primary">rpsJ</name>
    <name type="ordered locus">SAS2142</name>
</gene>
<dbReference type="EMBL" id="BX571857">
    <property type="protein sequence ID" value="CAG43953.1"/>
    <property type="molecule type" value="Genomic_DNA"/>
</dbReference>
<dbReference type="RefSeq" id="WP_001118667.1">
    <property type="nucleotide sequence ID" value="NC_002953.3"/>
</dbReference>
<dbReference type="SMR" id="Q6G770"/>
<dbReference type="GeneID" id="98346563"/>
<dbReference type="KEGG" id="sas:SAS2142"/>
<dbReference type="HOGENOM" id="CLU_122625_1_3_9"/>
<dbReference type="GO" id="GO:1990904">
    <property type="term" value="C:ribonucleoprotein complex"/>
    <property type="evidence" value="ECO:0007669"/>
    <property type="project" value="UniProtKB-KW"/>
</dbReference>
<dbReference type="GO" id="GO:0005840">
    <property type="term" value="C:ribosome"/>
    <property type="evidence" value="ECO:0007669"/>
    <property type="project" value="UniProtKB-KW"/>
</dbReference>
<dbReference type="GO" id="GO:0003735">
    <property type="term" value="F:structural constituent of ribosome"/>
    <property type="evidence" value="ECO:0007669"/>
    <property type="project" value="InterPro"/>
</dbReference>
<dbReference type="GO" id="GO:0000049">
    <property type="term" value="F:tRNA binding"/>
    <property type="evidence" value="ECO:0007669"/>
    <property type="project" value="UniProtKB-UniRule"/>
</dbReference>
<dbReference type="GO" id="GO:0006412">
    <property type="term" value="P:translation"/>
    <property type="evidence" value="ECO:0007669"/>
    <property type="project" value="UniProtKB-UniRule"/>
</dbReference>
<dbReference type="FunFam" id="3.30.70.600:FF:000001">
    <property type="entry name" value="30S ribosomal protein S10"/>
    <property type="match status" value="1"/>
</dbReference>
<dbReference type="Gene3D" id="3.30.70.600">
    <property type="entry name" value="Ribosomal protein S10 domain"/>
    <property type="match status" value="1"/>
</dbReference>
<dbReference type="HAMAP" id="MF_00508">
    <property type="entry name" value="Ribosomal_uS10"/>
    <property type="match status" value="1"/>
</dbReference>
<dbReference type="InterPro" id="IPR001848">
    <property type="entry name" value="Ribosomal_uS10"/>
</dbReference>
<dbReference type="InterPro" id="IPR018268">
    <property type="entry name" value="Ribosomal_uS10_CS"/>
</dbReference>
<dbReference type="InterPro" id="IPR027486">
    <property type="entry name" value="Ribosomal_uS10_dom"/>
</dbReference>
<dbReference type="InterPro" id="IPR036838">
    <property type="entry name" value="Ribosomal_uS10_dom_sf"/>
</dbReference>
<dbReference type="NCBIfam" id="NF001861">
    <property type="entry name" value="PRK00596.1"/>
    <property type="match status" value="1"/>
</dbReference>
<dbReference type="NCBIfam" id="TIGR01049">
    <property type="entry name" value="rpsJ_bact"/>
    <property type="match status" value="1"/>
</dbReference>
<dbReference type="PANTHER" id="PTHR11700">
    <property type="entry name" value="30S RIBOSOMAL PROTEIN S10 FAMILY MEMBER"/>
    <property type="match status" value="1"/>
</dbReference>
<dbReference type="Pfam" id="PF00338">
    <property type="entry name" value="Ribosomal_S10"/>
    <property type="match status" value="1"/>
</dbReference>
<dbReference type="PRINTS" id="PR00971">
    <property type="entry name" value="RIBOSOMALS10"/>
</dbReference>
<dbReference type="SMART" id="SM01403">
    <property type="entry name" value="Ribosomal_S10"/>
    <property type="match status" value="1"/>
</dbReference>
<dbReference type="SUPFAM" id="SSF54999">
    <property type="entry name" value="Ribosomal protein S10"/>
    <property type="match status" value="1"/>
</dbReference>
<dbReference type="PROSITE" id="PS00361">
    <property type="entry name" value="RIBOSOMAL_S10"/>
    <property type="match status" value="1"/>
</dbReference>
<protein>
    <recommendedName>
        <fullName evidence="1">Small ribosomal subunit protein uS10</fullName>
    </recommendedName>
    <alternativeName>
        <fullName evidence="2">30S ribosomal protein S10</fullName>
    </alternativeName>
</protein>
<proteinExistence type="inferred from homology"/>
<sequence length="102" mass="11576">MAKQKIRIRLKAYDHRVIDQSAEKIVETAKRSGADVSGPIPLPTEKSVYTIIRAVHKYKDSREQFEQRTHKRLIDIVNPTPKTVDALMGLNLPSGVDIEIKL</sequence>
<accession>Q6G770</accession>
<name>RS10_STAAS</name>